<dbReference type="EC" id="3.1.-.-" evidence="1"/>
<dbReference type="EMBL" id="AE000516">
    <property type="protein sequence ID" value="AAK44876.1"/>
    <property type="molecule type" value="Genomic_DNA"/>
</dbReference>
<dbReference type="PIR" id="E70611">
    <property type="entry name" value="E70611"/>
</dbReference>
<dbReference type="RefSeq" id="WP_003403236.1">
    <property type="nucleotide sequence ID" value="NZ_KK341227.1"/>
</dbReference>
<dbReference type="SMR" id="P9WF76"/>
<dbReference type="KEGG" id="mtc:MT0652"/>
<dbReference type="PATRIC" id="fig|83331.31.peg.692"/>
<dbReference type="HOGENOM" id="CLU_144760_0_0_11"/>
<dbReference type="Proteomes" id="UP000001020">
    <property type="component" value="Chromosome"/>
</dbReference>
<dbReference type="GO" id="GO:0000287">
    <property type="term" value="F:magnesium ion binding"/>
    <property type="evidence" value="ECO:0007669"/>
    <property type="project" value="UniProtKB-UniRule"/>
</dbReference>
<dbReference type="GO" id="GO:0004540">
    <property type="term" value="F:RNA nuclease activity"/>
    <property type="evidence" value="ECO:0007669"/>
    <property type="project" value="InterPro"/>
</dbReference>
<dbReference type="CDD" id="cd09871">
    <property type="entry name" value="PIN_MtVapC28-VapC30-like"/>
    <property type="match status" value="1"/>
</dbReference>
<dbReference type="Gene3D" id="3.40.50.1010">
    <property type="entry name" value="5'-nuclease"/>
    <property type="match status" value="1"/>
</dbReference>
<dbReference type="HAMAP" id="MF_00265">
    <property type="entry name" value="VapC_Nob1"/>
    <property type="match status" value="1"/>
</dbReference>
<dbReference type="InterPro" id="IPR029060">
    <property type="entry name" value="PIN-like_dom_sf"/>
</dbReference>
<dbReference type="InterPro" id="IPR002716">
    <property type="entry name" value="PIN_dom"/>
</dbReference>
<dbReference type="InterPro" id="IPR050556">
    <property type="entry name" value="Type_II_TA_system_RNase"/>
</dbReference>
<dbReference type="InterPro" id="IPR022907">
    <property type="entry name" value="VapC_family"/>
</dbReference>
<dbReference type="PANTHER" id="PTHR33653">
    <property type="entry name" value="RIBONUCLEASE VAPC2"/>
    <property type="match status" value="1"/>
</dbReference>
<dbReference type="PANTHER" id="PTHR33653:SF1">
    <property type="entry name" value="RIBONUCLEASE VAPC2"/>
    <property type="match status" value="1"/>
</dbReference>
<dbReference type="Pfam" id="PF01850">
    <property type="entry name" value="PIN"/>
    <property type="match status" value="1"/>
</dbReference>
<dbReference type="SUPFAM" id="SSF88723">
    <property type="entry name" value="PIN domain-like"/>
    <property type="match status" value="1"/>
</dbReference>
<gene>
    <name evidence="1" type="primary">vapC30</name>
    <name type="ordered locus">MT0652</name>
</gene>
<feature type="chain" id="PRO_0000428587" description="Ribonuclease VapC30">
    <location>
        <begin position="1"/>
        <end position="131"/>
    </location>
</feature>
<feature type="domain" description="PINc" evidence="1">
    <location>
        <begin position="1"/>
        <end position="129"/>
    </location>
</feature>
<feature type="binding site" evidence="1">
    <location>
        <position position="4"/>
    </location>
    <ligand>
        <name>Mg(2+)</name>
        <dbReference type="ChEBI" id="CHEBI:18420"/>
    </ligand>
</feature>
<feature type="binding site" evidence="1">
    <location>
        <position position="99"/>
    </location>
    <ligand>
        <name>Mg(2+)</name>
        <dbReference type="ChEBI" id="CHEBI:18420"/>
    </ligand>
</feature>
<organism>
    <name type="scientific">Mycobacterium tuberculosis (strain CDC 1551 / Oshkosh)</name>
    <dbReference type="NCBI Taxonomy" id="83331"/>
    <lineage>
        <taxon>Bacteria</taxon>
        <taxon>Bacillati</taxon>
        <taxon>Actinomycetota</taxon>
        <taxon>Actinomycetes</taxon>
        <taxon>Mycobacteriales</taxon>
        <taxon>Mycobacteriaceae</taxon>
        <taxon>Mycobacterium</taxon>
        <taxon>Mycobacterium tuberculosis complex</taxon>
    </lineage>
</organism>
<name>VPC30_MYCTO</name>
<protein>
    <recommendedName>
        <fullName evidence="1">Ribonuclease VapC30</fullName>
        <shortName evidence="1">RNase VapC30</shortName>
        <ecNumber evidence="1">3.1.-.-</ecNumber>
    </recommendedName>
    <alternativeName>
        <fullName evidence="1">Toxin VapC30</fullName>
    </alternativeName>
</protein>
<reference key="1">
    <citation type="journal article" date="2002" name="J. Bacteriol.">
        <title>Whole-genome comparison of Mycobacterium tuberculosis clinical and laboratory strains.</title>
        <authorList>
            <person name="Fleischmann R.D."/>
            <person name="Alland D."/>
            <person name="Eisen J.A."/>
            <person name="Carpenter L."/>
            <person name="White O."/>
            <person name="Peterson J.D."/>
            <person name="DeBoy R.T."/>
            <person name="Dodson R.J."/>
            <person name="Gwinn M.L."/>
            <person name="Haft D.H."/>
            <person name="Hickey E.K."/>
            <person name="Kolonay J.F."/>
            <person name="Nelson W.C."/>
            <person name="Umayam L.A."/>
            <person name="Ermolaeva M.D."/>
            <person name="Salzberg S.L."/>
            <person name="Delcher A."/>
            <person name="Utterback T.R."/>
            <person name="Weidman J.F."/>
            <person name="Khouri H.M."/>
            <person name="Gill J."/>
            <person name="Mikula A."/>
            <person name="Bishai W."/>
            <person name="Jacobs W.R. Jr."/>
            <person name="Venter J.C."/>
            <person name="Fraser C.M."/>
        </authorList>
    </citation>
    <scope>NUCLEOTIDE SEQUENCE [LARGE SCALE GENOMIC DNA]</scope>
    <source>
        <strain>CDC 1551 / Oshkosh</strain>
    </source>
</reference>
<comment type="function">
    <text evidence="1">Toxic component of a type II toxin-antitoxin (TA) system. An RNase. Its toxic effect is neutralized by coexpression with cognate antitoxin VapB30 (By similarity).</text>
</comment>
<comment type="cofactor">
    <cofactor evidence="1">
        <name>Mg(2+)</name>
        <dbReference type="ChEBI" id="CHEBI:18420"/>
    </cofactor>
</comment>
<comment type="similarity">
    <text evidence="1">Belongs to the PINc/VapC protein family.</text>
</comment>
<evidence type="ECO:0000255" key="1">
    <source>
        <dbReference type="HAMAP-Rule" id="MF_00265"/>
    </source>
</evidence>
<accession>P9WF76</accession>
<accession>L0T4A1</accession>
<accession>P67240</accession>
<accession>P96914</accession>
<sequence length="131" mass="14250">MVIDTSALVAMLSDEPDAERFEAAVEADHIRLMSTASYLETALVIEARFGEPGGRELDLWLHRAAVDLVAVHADQADAARAAYRTYGKGRHRAGLNYGDCFSYGLAKISGQPLLFKGEDFQHTDIATVALP</sequence>
<proteinExistence type="inferred from homology"/>
<keyword id="KW-0378">Hydrolase</keyword>
<keyword id="KW-0460">Magnesium</keyword>
<keyword id="KW-0479">Metal-binding</keyword>
<keyword id="KW-0540">Nuclease</keyword>
<keyword id="KW-1185">Reference proteome</keyword>
<keyword id="KW-1277">Toxin-antitoxin system</keyword>